<keyword id="KW-1003">Cell membrane</keyword>
<keyword id="KW-0472">Membrane</keyword>
<keyword id="KW-1185">Reference proteome</keyword>
<keyword id="KW-0732">Signal</keyword>
<keyword id="KW-0812">Transmembrane</keyword>
<keyword id="KW-1133">Transmembrane helix</keyword>
<protein>
    <recommendedName>
        <fullName>Uncharacterized protein RP104</fullName>
    </recommendedName>
</protein>
<sequence length="1124" mass="124975">MALFPRSILIALVLSFVLNLGLVTKIHAKDTLDSIIDILSGLTCETQGVGDLMRTEFSHTCIVAPFFTFAVMNLVSPVLYMNTFLKLKINDSDLFNDSDFGNFPGGQCTRANRIDPKNPELRFALCNNAKLIVSRAKSVAESALAIAKAVLTWSDPWDDIKQAWENKKKEYHIPYRGKPGDDGFAFDVGFPVIYWKVIQDRDRICVSTKGFTGDVPVGCKYMKEPFPKSIYNSFIDVEDKNFIKDPTNDTPSDPLALVSCSAAGEGCYQKAYNASKTAVVMTSPLIECIKQMIARLLISKDVCSFDNVDQVVNLSSRQDSALFQFQVGMYKIVTAFLTLYVMFFGFKLLLAGKVPPKSEYINFILKIIFVTYFSIGININPANGSQYDRLDGMIQWAFPFLLNGINGLASWVMNAAPSGLCKFNNIHYDGSVSYIALWDALDCRVAHYLGLDILSTLLVENTYRSHDFLNFDFFSFSAPPYIYLLIPAIISGNMMLVSLALSYPLLVISVAAFMVNATIMCMISIVILGILAPLFVPMFLFAYTRNYFDSWVKLMISFLLQPMVVVTFMITMFAVYDYGFYGKCQYKSKLIHNSIEDKIQGGLKSKRDVLIFYINNDWDDTSQYPDKDSVESCKNSLGYMLNNPINMAFNFAKDNISEIVNSKPGETTTDEFLSKFQFLSGVVLGPGMFFMSPKVLFEKIKNILLALVTACFTLYLMYNFSSQLAEFAADMTEGVALNNVAIKPQAIFKAAMAALSTAGTATKGIDQMASRGGGARDLGGAKGFVSDNTASSGSAVGDNIAVSRGASTPTVTTTTDSSSITNSITKTVSSDVRSDIVTPHSPTTAFSQHSSISSTIPTSVHNIKPTSIKEIVSNNRESKKEINNTMRSQEKIKSASKALGLIDYSFNLKEHDNPIGVKQIRENAEIRDKRVEVEKAWNELVASGRGRIRDQQSEATSERRTNAEKKWKELVDSGVVTEIRERDNSVTNQFDKLADELDKSKKSKVEENKNITKDIKVDNTNTLPQEKVDNTNRRSGLIDYSFNLKEHDNPIGVKQIRENAEIRDKRVKVEKAWNELVASGGGRVQEQAGVKITERRANAEKVWDELVKSGVVTEKRDNSSNENS</sequence>
<reference key="1">
    <citation type="journal article" date="1998" name="Nature">
        <title>The genome sequence of Rickettsia prowazekii and the origin of mitochondria.</title>
        <authorList>
            <person name="Andersson S.G.E."/>
            <person name="Zomorodipour A."/>
            <person name="Andersson J.O."/>
            <person name="Sicheritz-Ponten T."/>
            <person name="Alsmark U.C.M."/>
            <person name="Podowski R.M."/>
            <person name="Naeslund A.K."/>
            <person name="Eriksson A.-S."/>
            <person name="Winkler H.H."/>
            <person name="Kurland C.G."/>
        </authorList>
    </citation>
    <scope>NUCLEOTIDE SEQUENCE [LARGE SCALE GENOMIC DNA]</scope>
    <source>
        <strain>Madrid E</strain>
    </source>
</reference>
<feature type="signal peptide" evidence="1">
    <location>
        <begin position="1"/>
        <end position="28"/>
    </location>
</feature>
<feature type="chain" id="PRO_0000269205" description="Uncharacterized protein RP104">
    <location>
        <begin position="29"/>
        <end position="1124"/>
    </location>
</feature>
<feature type="transmembrane region" description="Helical" evidence="1">
    <location>
        <begin position="332"/>
        <end position="352"/>
    </location>
</feature>
<feature type="transmembrane region" description="Helical" evidence="1">
    <location>
        <begin position="359"/>
        <end position="379"/>
    </location>
</feature>
<feature type="transmembrane region" description="Helical" evidence="1">
    <location>
        <begin position="393"/>
        <end position="413"/>
    </location>
</feature>
<feature type="transmembrane region" description="Helical" evidence="1">
    <location>
        <begin position="495"/>
        <end position="515"/>
    </location>
</feature>
<feature type="transmembrane region" description="Helical" evidence="1">
    <location>
        <begin position="522"/>
        <end position="542"/>
    </location>
</feature>
<feature type="transmembrane region" description="Helical" evidence="1">
    <location>
        <begin position="555"/>
        <end position="575"/>
    </location>
</feature>
<feature type="transmembrane region" description="Helical" evidence="1">
    <location>
        <begin position="700"/>
        <end position="720"/>
    </location>
</feature>
<comment type="subcellular location">
    <subcellularLocation>
        <location evidence="2">Cell membrane</location>
        <topology evidence="2">Multi-pass membrane protein</topology>
    </subcellularLocation>
</comment>
<comment type="similarity">
    <text evidence="2">Belongs to the TrbL/VirB6 family.</text>
</comment>
<name>Y104_RICPR</name>
<accession>Q9ZE44</accession>
<evidence type="ECO:0000255" key="1"/>
<evidence type="ECO:0000305" key="2"/>
<organism>
    <name type="scientific">Rickettsia prowazekii (strain Madrid E)</name>
    <dbReference type="NCBI Taxonomy" id="272947"/>
    <lineage>
        <taxon>Bacteria</taxon>
        <taxon>Pseudomonadati</taxon>
        <taxon>Pseudomonadota</taxon>
        <taxon>Alphaproteobacteria</taxon>
        <taxon>Rickettsiales</taxon>
        <taxon>Rickettsiaceae</taxon>
        <taxon>Rickettsieae</taxon>
        <taxon>Rickettsia</taxon>
        <taxon>typhus group</taxon>
    </lineage>
</organism>
<proteinExistence type="inferred from homology"/>
<dbReference type="EMBL" id="AJ235270">
    <property type="protein sequence ID" value="CAA14573.1"/>
    <property type="molecule type" value="Genomic_DNA"/>
</dbReference>
<dbReference type="PIR" id="F71719">
    <property type="entry name" value="F71719"/>
</dbReference>
<dbReference type="RefSeq" id="NP_220496.1">
    <property type="nucleotide sequence ID" value="NC_000963.1"/>
</dbReference>
<dbReference type="RefSeq" id="WP_010886210.1">
    <property type="nucleotide sequence ID" value="NC_000963.1"/>
</dbReference>
<dbReference type="SMR" id="Q9ZE44"/>
<dbReference type="STRING" id="272947.gene:17555187"/>
<dbReference type="EnsemblBacteria" id="CAA14573">
    <property type="protein sequence ID" value="CAA14573"/>
    <property type="gene ID" value="CAA14573"/>
</dbReference>
<dbReference type="KEGG" id="rpr:RP104"/>
<dbReference type="PATRIC" id="fig|272947.5.peg.105"/>
<dbReference type="eggNOG" id="COG3704">
    <property type="taxonomic scope" value="Bacteria"/>
</dbReference>
<dbReference type="HOGENOM" id="CLU_279905_0_0_5"/>
<dbReference type="OrthoDB" id="7163542at2"/>
<dbReference type="Proteomes" id="UP000002480">
    <property type="component" value="Chromosome"/>
</dbReference>
<dbReference type="GO" id="GO:0005886">
    <property type="term" value="C:plasma membrane"/>
    <property type="evidence" value="ECO:0007669"/>
    <property type="project" value="UniProtKB-SubCell"/>
</dbReference>
<dbReference type="GO" id="GO:0030255">
    <property type="term" value="P:protein secretion by the type IV secretion system"/>
    <property type="evidence" value="ECO:0007669"/>
    <property type="project" value="InterPro"/>
</dbReference>
<dbReference type="InterPro" id="IPR007688">
    <property type="entry name" value="Conjugal_tfr_TrbL/VirB6"/>
</dbReference>
<dbReference type="Pfam" id="PF04610">
    <property type="entry name" value="TrbL"/>
    <property type="match status" value="1"/>
</dbReference>
<gene>
    <name type="ordered locus">RP104</name>
</gene>